<reference key="1">
    <citation type="journal article" date="2002" name="Curr. Biol.">
        <title>Timing of events in mitosis.</title>
        <authorList>
            <person name="Georgi A.B."/>
            <person name="Stukenberg P.T."/>
            <person name="Kirschner M.W."/>
        </authorList>
    </citation>
    <scope>NUCLEOTIDE SEQUENCE [MRNA]</scope>
    <scope>PHOSPHORYLATION</scope>
</reference>
<reference key="2">
    <citation type="submission" date="2004-04" db="EMBL/GenBank/DDBJ databases">
        <authorList>
            <consortium name="NIH - Xenopus Gene Collection (XGC) project"/>
        </authorList>
    </citation>
    <scope>NUCLEOTIDE SEQUENCE [LARGE SCALE MRNA]</scope>
    <source>
        <tissue>Embryo</tissue>
    </source>
</reference>
<proteinExistence type="evidence at protein level"/>
<gene>
    <name type="primary">cuedc2-a</name>
</gene>
<organism>
    <name type="scientific">Xenopus laevis</name>
    <name type="common">African clawed frog</name>
    <dbReference type="NCBI Taxonomy" id="8355"/>
    <lineage>
        <taxon>Eukaryota</taxon>
        <taxon>Metazoa</taxon>
        <taxon>Chordata</taxon>
        <taxon>Craniata</taxon>
        <taxon>Vertebrata</taxon>
        <taxon>Euteleostomi</taxon>
        <taxon>Amphibia</taxon>
        <taxon>Batrachia</taxon>
        <taxon>Anura</taxon>
        <taxon>Pipoidea</taxon>
        <taxon>Pipidae</taxon>
        <taxon>Xenopodinae</taxon>
        <taxon>Xenopus</taxon>
        <taxon>Xenopus</taxon>
    </lineage>
</organism>
<dbReference type="EMBL" id="AF419151">
    <property type="protein sequence ID" value="AAM33246.1"/>
    <property type="molecule type" value="mRNA"/>
</dbReference>
<dbReference type="EMBL" id="BC068784">
    <property type="protein sequence ID" value="AAH68784.1"/>
    <property type="molecule type" value="mRNA"/>
</dbReference>
<dbReference type="RefSeq" id="NP_001082244.1">
    <property type="nucleotide sequence ID" value="NM_001088775.1"/>
</dbReference>
<dbReference type="SMR" id="Q6NU18"/>
<dbReference type="DNASU" id="398317"/>
<dbReference type="GeneID" id="398317"/>
<dbReference type="KEGG" id="xla:398317"/>
<dbReference type="AGR" id="Xenbase:XB-GENE-6251606"/>
<dbReference type="CTD" id="398317"/>
<dbReference type="Xenbase" id="XB-GENE-6251606">
    <property type="gene designation" value="cuedc2.S"/>
</dbReference>
<dbReference type="OrthoDB" id="10060331at2759"/>
<dbReference type="Proteomes" id="UP000186698">
    <property type="component" value="Chromosome 7S"/>
</dbReference>
<dbReference type="Bgee" id="398317">
    <property type="expression patterns" value="Expressed in egg cell and 19 other cell types or tissues"/>
</dbReference>
<dbReference type="GO" id="GO:0005737">
    <property type="term" value="C:cytoplasm"/>
    <property type="evidence" value="ECO:0007669"/>
    <property type="project" value="UniProtKB-SubCell"/>
</dbReference>
<dbReference type="GO" id="GO:0005634">
    <property type="term" value="C:nucleus"/>
    <property type="evidence" value="ECO:0007669"/>
    <property type="project" value="UniProtKB-SubCell"/>
</dbReference>
<dbReference type="CDD" id="cd14367">
    <property type="entry name" value="CUE_CUED2"/>
    <property type="match status" value="1"/>
</dbReference>
<dbReference type="InterPro" id="IPR039805">
    <property type="entry name" value="CUE_CUED2"/>
</dbReference>
<dbReference type="PANTHER" id="PTHR12493">
    <property type="entry name" value="CUE DOMAIN CONTAINING 2"/>
    <property type="match status" value="1"/>
</dbReference>
<dbReference type="PANTHER" id="PTHR12493:SF0">
    <property type="entry name" value="CUE DOMAIN-CONTAINING PROTEIN 2"/>
    <property type="match status" value="1"/>
</dbReference>
<comment type="function">
    <text evidence="1">May play a role in targeting proteins for ubiquitination and subsequent proteasomal degradation.</text>
</comment>
<comment type="subcellular location">
    <subcellularLocation>
        <location evidence="1">Cytoplasm</location>
    </subcellularLocation>
    <subcellularLocation>
        <location evidence="1">Nucleus</location>
    </subcellularLocation>
</comment>
<comment type="PTM">
    <text evidence="3">Phosphorylated.</text>
</comment>
<comment type="similarity">
    <text evidence="4">Belongs to the CUEDC2 family.</text>
</comment>
<accession>Q6NU18</accession>
<accession>Q8JJ43</accession>
<keyword id="KW-0963">Cytoplasm</keyword>
<keyword id="KW-0539">Nucleus</keyword>
<keyword id="KW-0597">Phosphoprotein</keyword>
<keyword id="KW-1185">Reference proteome</keyword>
<keyword id="KW-0833">Ubl conjugation pathway</keyword>
<sequence length="273" mass="30585">MALEKIIRESLTGFIQCHIPHADLSALDEVFYAYATGVLEELGSQNSSEEDFEMESFVEMLEAYIPGFSEISSGKVYDMLFELSRRLSEARGKENVSPKPTAEVSFMTPTSSSTESSKKIETEPLEGAVAQEKDDAKNGIDLLLEIFPSCTVSQAQTALSMAKGDLEDAVQIIVDGKVIADNHSGSKDLQGAPKTDDLKDFILQKYMLVDTEDDKKTYRPVAPKEAPKKMIRYIDNQVVSTKGERYKDIKKPESEEMKKTYINLKPARKYKFH</sequence>
<feature type="chain" id="PRO_0000282996" description="CUE domain-containing protein 2-A">
    <location>
        <begin position="1"/>
        <end position="273"/>
    </location>
</feature>
<feature type="domain" description="CUE">
    <location>
        <begin position="135"/>
        <end position="178"/>
    </location>
</feature>
<feature type="region of interest" description="Disordered" evidence="2">
    <location>
        <begin position="92"/>
        <end position="121"/>
    </location>
</feature>
<feature type="sequence conflict" description="In Ref. 1; AAM33246." evidence="4" ref="1">
    <original>S</original>
    <variation>F</variation>
    <location>
        <position position="160"/>
    </location>
</feature>
<evidence type="ECO:0000250" key="1"/>
<evidence type="ECO:0000256" key="2">
    <source>
        <dbReference type="SAM" id="MobiDB-lite"/>
    </source>
</evidence>
<evidence type="ECO:0000269" key="3">
    <source>
    </source>
</evidence>
<evidence type="ECO:0000305" key="4"/>
<protein>
    <recommendedName>
        <fullName>CUE domain-containing protein 2-A</fullName>
    </recommendedName>
    <alternativeName>
        <fullName>Mitotic phosphoprotein 38</fullName>
    </alternativeName>
</protein>
<name>CUE2A_XENLA</name>